<comment type="function">
    <text evidence="1">Involved in the import of serine and threonine into the cell, with the concomitant import of sodium (symport system).</text>
</comment>
<comment type="catalytic activity">
    <reaction evidence="1">
        <text>L-serine(in) + Na(+)(in) = L-serine(out) + Na(+)(out)</text>
        <dbReference type="Rhea" id="RHEA:29575"/>
        <dbReference type="ChEBI" id="CHEBI:29101"/>
        <dbReference type="ChEBI" id="CHEBI:33384"/>
    </reaction>
    <physiologicalReaction direction="right-to-left" evidence="1">
        <dbReference type="Rhea" id="RHEA:29577"/>
    </physiologicalReaction>
</comment>
<comment type="catalytic activity">
    <reaction evidence="1">
        <text>L-threonine(in) + Na(+)(in) = L-threonine(out) + Na(+)(out)</text>
        <dbReference type="Rhea" id="RHEA:69999"/>
        <dbReference type="ChEBI" id="CHEBI:29101"/>
        <dbReference type="ChEBI" id="CHEBI:57926"/>
    </reaction>
    <physiologicalReaction direction="right-to-left" evidence="1">
        <dbReference type="Rhea" id="RHEA:70001"/>
    </physiologicalReaction>
</comment>
<comment type="subcellular location">
    <subcellularLocation>
        <location evidence="1">Cell inner membrane</location>
        <topology evidence="1">Multi-pass membrane protein</topology>
    </subcellularLocation>
</comment>
<comment type="similarity">
    <text evidence="1">Belongs to the dicarboxylate/amino acid:cation symporter (DAACS) (TC 2.A.23) family.</text>
</comment>
<proteinExistence type="inferred from homology"/>
<feature type="chain" id="PRO_1000215619" description="Serine/threonine transporter SstT">
    <location>
        <begin position="1"/>
        <end position="413"/>
    </location>
</feature>
<feature type="transmembrane region" description="Helical" evidence="1">
    <location>
        <begin position="14"/>
        <end position="34"/>
    </location>
</feature>
<feature type="transmembrane region" description="Helical" evidence="1">
    <location>
        <begin position="44"/>
        <end position="64"/>
    </location>
</feature>
<feature type="transmembrane region" description="Helical" evidence="1">
    <location>
        <begin position="82"/>
        <end position="102"/>
    </location>
</feature>
<feature type="transmembrane region" description="Helical" evidence="1">
    <location>
        <begin position="141"/>
        <end position="161"/>
    </location>
</feature>
<feature type="transmembrane region" description="Helical" evidence="1">
    <location>
        <begin position="178"/>
        <end position="198"/>
    </location>
</feature>
<feature type="transmembrane region" description="Helical" evidence="1">
    <location>
        <begin position="217"/>
        <end position="237"/>
    </location>
</feature>
<feature type="transmembrane region" description="Helical" evidence="1">
    <location>
        <begin position="290"/>
        <end position="310"/>
    </location>
</feature>
<feature type="transmembrane region" description="Helical" evidence="1">
    <location>
        <begin position="330"/>
        <end position="350"/>
    </location>
</feature>
<feature type="transmembrane region" description="Helical" evidence="1">
    <location>
        <begin position="356"/>
        <end position="376"/>
    </location>
</feature>
<gene>
    <name evidence="1" type="primary">sstT</name>
    <name type="ordered locus">NT01EI_0506</name>
</gene>
<sequence>MEKHSGFVRFITRGSLVGQILVGLVLGIALASFSQSGAIAAGLLGTLFVSALKAVAPVLVFILVAASIANHRQGQKTNMRPIVLLYLLGTFAAALVAVVVSFAFPSQLALVSHTNDITPPGGIVEVLQSLLMNVVDNPFHALASGNFIGILAWAIGLGVALRHASDTTKRVVGDLSYGVTFIVRVVIRFAPLGIFGLVSSTLAETGFDALWGYAHLLMVLIGAMLLVALVLNPLIVFWKIRRNPYPLVFTCLRESGLTAFFTRSSAANIPVNMELCKKLGLNEDTYAVSIPLGATINMAGAAITITVLTLAAAHTLEISVDLPTALLLSLVAAVCACGASGVAGGSLLLIPLACSLFGISSDIAMQVVAVGFIIGVLQDSCETALNSSTDVLFTATACVAAEESTGDSAAELG</sequence>
<keyword id="KW-0029">Amino-acid transport</keyword>
<keyword id="KW-0997">Cell inner membrane</keyword>
<keyword id="KW-1003">Cell membrane</keyword>
<keyword id="KW-0472">Membrane</keyword>
<keyword id="KW-0769">Symport</keyword>
<keyword id="KW-0812">Transmembrane</keyword>
<keyword id="KW-1133">Transmembrane helix</keyword>
<keyword id="KW-0813">Transport</keyword>
<name>SSTT_EDWI9</name>
<organism>
    <name type="scientific">Edwardsiella ictaluri (strain 93-146)</name>
    <dbReference type="NCBI Taxonomy" id="634503"/>
    <lineage>
        <taxon>Bacteria</taxon>
        <taxon>Pseudomonadati</taxon>
        <taxon>Pseudomonadota</taxon>
        <taxon>Gammaproteobacteria</taxon>
        <taxon>Enterobacterales</taxon>
        <taxon>Hafniaceae</taxon>
        <taxon>Edwardsiella</taxon>
    </lineage>
</organism>
<evidence type="ECO:0000255" key="1">
    <source>
        <dbReference type="HAMAP-Rule" id="MF_01582"/>
    </source>
</evidence>
<protein>
    <recommendedName>
        <fullName evidence="1">Serine/threonine transporter SstT</fullName>
    </recommendedName>
    <alternativeName>
        <fullName evidence="1">Na(+)/serine-threonine symporter</fullName>
    </alternativeName>
</protein>
<reference key="1">
    <citation type="submission" date="2009-03" db="EMBL/GenBank/DDBJ databases">
        <title>Complete genome sequence of Edwardsiella ictaluri 93-146.</title>
        <authorList>
            <person name="Williams M.L."/>
            <person name="Gillaspy A.F."/>
            <person name="Dyer D.W."/>
            <person name="Thune R.L."/>
            <person name="Waldbieser G.C."/>
            <person name="Schuster S.C."/>
            <person name="Gipson J."/>
            <person name="Zaitshik J."/>
            <person name="Landry C."/>
            <person name="Lawrence M.L."/>
        </authorList>
    </citation>
    <scope>NUCLEOTIDE SEQUENCE [LARGE SCALE GENOMIC DNA]</scope>
    <source>
        <strain>93-146</strain>
    </source>
</reference>
<accession>C5BH58</accession>
<dbReference type="EMBL" id="CP001600">
    <property type="protein sequence ID" value="ACR67741.1"/>
    <property type="molecule type" value="Genomic_DNA"/>
</dbReference>
<dbReference type="RefSeq" id="WP_015869942.1">
    <property type="nucleotide sequence ID" value="NZ_CP169062.1"/>
</dbReference>
<dbReference type="SMR" id="C5BH58"/>
<dbReference type="GeneID" id="69537588"/>
<dbReference type="KEGG" id="eic:NT01EI_0506"/>
<dbReference type="PATRIC" id="fig|634503.3.peg.459"/>
<dbReference type="HOGENOM" id="CLU_044581_0_0_6"/>
<dbReference type="OrthoDB" id="9768885at2"/>
<dbReference type="Proteomes" id="UP000001485">
    <property type="component" value="Chromosome"/>
</dbReference>
<dbReference type="GO" id="GO:0005886">
    <property type="term" value="C:plasma membrane"/>
    <property type="evidence" value="ECO:0007669"/>
    <property type="project" value="UniProtKB-SubCell"/>
</dbReference>
<dbReference type="GO" id="GO:0005295">
    <property type="term" value="F:neutral L-amino acid:sodium symporter activity"/>
    <property type="evidence" value="ECO:0007669"/>
    <property type="project" value="TreeGrafter"/>
</dbReference>
<dbReference type="GO" id="GO:0032329">
    <property type="term" value="P:serine transport"/>
    <property type="evidence" value="ECO:0007669"/>
    <property type="project" value="InterPro"/>
</dbReference>
<dbReference type="GO" id="GO:0015826">
    <property type="term" value="P:threonine transport"/>
    <property type="evidence" value="ECO:0007669"/>
    <property type="project" value="InterPro"/>
</dbReference>
<dbReference type="FunFam" id="1.10.3860.10:FF:000003">
    <property type="entry name" value="Serine/threonine transporter sstT"/>
    <property type="match status" value="1"/>
</dbReference>
<dbReference type="Gene3D" id="1.10.3860.10">
    <property type="entry name" value="Sodium:dicarboxylate symporter"/>
    <property type="match status" value="1"/>
</dbReference>
<dbReference type="HAMAP" id="MF_01582">
    <property type="entry name" value="Ser_Thr_transp_SstT"/>
    <property type="match status" value="1"/>
</dbReference>
<dbReference type="InterPro" id="IPR001991">
    <property type="entry name" value="Na-dicarboxylate_symporter"/>
</dbReference>
<dbReference type="InterPro" id="IPR036458">
    <property type="entry name" value="Na:dicarbo_symporter_sf"/>
</dbReference>
<dbReference type="InterPro" id="IPR023025">
    <property type="entry name" value="Ser_Thr_transp_SstT"/>
</dbReference>
<dbReference type="NCBIfam" id="NF010151">
    <property type="entry name" value="PRK13628.1"/>
    <property type="match status" value="1"/>
</dbReference>
<dbReference type="PANTHER" id="PTHR42865">
    <property type="entry name" value="PROTON/GLUTAMATE-ASPARTATE SYMPORTER"/>
    <property type="match status" value="1"/>
</dbReference>
<dbReference type="PANTHER" id="PTHR42865:SF8">
    <property type="entry name" value="SERINE_THREONINE TRANSPORTER SSTT"/>
    <property type="match status" value="1"/>
</dbReference>
<dbReference type="Pfam" id="PF00375">
    <property type="entry name" value="SDF"/>
    <property type="match status" value="1"/>
</dbReference>
<dbReference type="PRINTS" id="PR00173">
    <property type="entry name" value="EDTRNSPORT"/>
</dbReference>
<dbReference type="SUPFAM" id="SSF118215">
    <property type="entry name" value="Proton glutamate symport protein"/>
    <property type="match status" value="1"/>
</dbReference>